<keyword id="KW-0997">Cell inner membrane</keyword>
<keyword id="KW-1003">Cell membrane</keyword>
<keyword id="KW-0378">Hydrolase</keyword>
<keyword id="KW-0472">Membrane</keyword>
<keyword id="KW-0479">Metal-binding</keyword>
<keyword id="KW-0489">Methyltransferase</keyword>
<keyword id="KW-0511">Multifunctional enzyme</keyword>
<keyword id="KW-0645">Protease</keyword>
<keyword id="KW-0949">S-adenosyl-L-methionine</keyword>
<keyword id="KW-0808">Transferase</keyword>
<keyword id="KW-0812">Transmembrane</keyword>
<keyword id="KW-1133">Transmembrane helix</keyword>
<keyword id="KW-0862">Zinc</keyword>
<comment type="function">
    <text evidence="1">Plays an essential role in type IV pili and type II pseudopili formation by proteolytically removing the leader sequence from substrate proteins and subsequently monomethylating the alpha-amino group of the newly exposed N-terminal phenylalanine.</text>
</comment>
<comment type="catalytic activity">
    <reaction evidence="1">
        <text>Typically cleaves a -Gly-|-Phe- bond to release an N-terminal, basic peptide of 5-8 residues from type IV prepilin, and then N-methylates the new N-terminal amino group, the methyl donor being S-adenosyl-L-methionine.</text>
        <dbReference type="EC" id="3.4.23.43"/>
    </reaction>
</comment>
<comment type="cofactor">
    <cofactor evidence="1">
        <name>Zn(2+)</name>
        <dbReference type="ChEBI" id="CHEBI:29105"/>
    </cofactor>
    <text evidence="1">Zinc is required for the N-terminal methylation of the mature pilin, but not for signal peptide cleavage.</text>
</comment>
<comment type="subcellular location">
    <subcellularLocation>
        <location evidence="1">Cell inner membrane</location>
        <topology evidence="1">Multi-pass membrane protein</topology>
    </subcellularLocation>
</comment>
<comment type="similarity">
    <text evidence="3">Belongs to the peptidase A24 family.</text>
</comment>
<reference key="1">
    <citation type="journal article" date="1993" name="Mol. Microbiol.">
        <title>Conservation of genes encoding components of a type IV pilus assembly/two-step protein export pathway in Neisseria gonorrhoeae.</title>
        <authorList>
            <person name="Lauer P."/>
            <person name="Albertson N.H."/>
            <person name="Koomey M."/>
        </authorList>
    </citation>
    <scope>NUCLEOTIDE SEQUENCE [GENOMIC DNA]</scope>
    <source>
        <strain>MS11</strain>
    </source>
</reference>
<reference key="2">
    <citation type="submission" date="1995-07" db="EMBL/GenBank/DDBJ databases">
        <authorList>
            <person name="Koomey M."/>
        </authorList>
    </citation>
    <scope>SEQUENCE REVISION TO 247-255</scope>
</reference>
<reference key="3">
    <citation type="journal article" date="1994" name="J. Bacteriol.">
        <title>Type IV prepilin peptidase gene of Neisseria gonorrhoeae MS11: presence of a related gene in other piliated and nonpiliated Neisseria strains.</title>
        <authorList>
            <person name="Dupuy B."/>
            <person name="Pugsley A.P."/>
        </authorList>
    </citation>
    <scope>NUCLEOTIDE SEQUENCE [GENOMIC DNA]</scope>
    <source>
        <strain>MS11</strain>
    </source>
</reference>
<reference key="4">
    <citation type="journal article" date="1995" name="Mol. Microbiol.">
        <title>Characterization of the pilF-pilD pilus-assembly locus of Neisseria gonorrhoeae.</title>
        <authorList>
            <person name="Freitag N.E."/>
            <person name="Seifert H.S."/>
            <person name="Koomey M."/>
        </authorList>
    </citation>
    <scope>NUCLEOTIDE SEQUENCE [GENOMIC DNA] OF 236-286</scope>
    <source>
        <strain>MS11</strain>
    </source>
</reference>
<sequence>MSDLSVLSPFAVPLAAVLGLLVGSFLNVVIYRVPVMMERGWTVFAKEHLNLPLTDDESRTFNLMKPDSCCPKCRVPIRAWQNIPIVSYLLLRGKCASCQTKISIRYPLIELLTGVLFGLVAWQYGWSWITLGGLILTAFLISLTFIDADTQYLPDSMTLPLIWLGLIFNLDGGFVPLQSAVLGAVAGYSSLWLLCAVYKLLTGKTGMGNGDFKLIAALGAWLGISALPVLIFVSSLIGLVAAIVMRVAKGRHFAFGPALTVSGWIIFTANDSVWRAVNWWLTHPVR</sequence>
<protein>
    <recommendedName>
        <fullName>Prepilin leader peptidase/N-methyltransferase</fullName>
    </recommendedName>
    <domain>
        <recommendedName>
            <fullName>Leader peptidase</fullName>
            <ecNumber evidence="1">3.4.23.43</ecNumber>
        </recommendedName>
        <alternativeName>
            <fullName>Prepilin peptidase</fullName>
        </alternativeName>
    </domain>
    <domain>
        <recommendedName>
            <fullName>N-methyltransferase</fullName>
            <ecNumber evidence="1">2.1.1.-</ecNumber>
        </recommendedName>
    </domain>
</protein>
<gene>
    <name type="primary">pilD</name>
</gene>
<evidence type="ECO:0000250" key="1">
    <source>
        <dbReference type="UniProtKB" id="P22610"/>
    </source>
</evidence>
<evidence type="ECO:0000255" key="2"/>
<evidence type="ECO:0000305" key="3"/>
<organism>
    <name type="scientific">Neisseria gonorrhoeae</name>
    <dbReference type="NCBI Taxonomy" id="485"/>
    <lineage>
        <taxon>Bacteria</taxon>
        <taxon>Pseudomonadati</taxon>
        <taxon>Pseudomonadota</taxon>
        <taxon>Betaproteobacteria</taxon>
        <taxon>Neisseriales</taxon>
        <taxon>Neisseriaceae</taxon>
        <taxon>Neisseria</taxon>
    </lineage>
</organism>
<accession>P33566</accession>
<accession>Q50963</accession>
<accession>Q53404</accession>
<feature type="chain" id="PRO_0000192624" description="Prepilin leader peptidase/N-methyltransferase">
    <location>
        <begin position="1"/>
        <end position="286"/>
    </location>
</feature>
<feature type="transmembrane region" description="Helical" evidence="2">
    <location>
        <begin position="10"/>
        <end position="30"/>
    </location>
</feature>
<feature type="transmembrane region" description="Helical" evidence="2">
    <location>
        <begin position="102"/>
        <end position="122"/>
    </location>
</feature>
<feature type="transmembrane region" description="Helical" evidence="2">
    <location>
        <begin position="126"/>
        <end position="146"/>
    </location>
</feature>
<feature type="transmembrane region" description="Helical" evidence="2">
    <location>
        <begin position="157"/>
        <end position="177"/>
    </location>
</feature>
<feature type="transmembrane region" description="Helical" evidence="2">
    <location>
        <begin position="181"/>
        <end position="201"/>
    </location>
</feature>
<feature type="transmembrane region" description="Helical" evidence="2">
    <location>
        <begin position="224"/>
        <end position="244"/>
    </location>
</feature>
<feature type="transmembrane region" description="Helical" evidence="2">
    <location>
        <begin position="250"/>
        <end position="270"/>
    </location>
</feature>
<feature type="binding site" evidence="1">
    <location>
        <position position="70"/>
    </location>
    <ligand>
        <name>Zn(2+)</name>
        <dbReference type="ChEBI" id="CHEBI:29105"/>
    </ligand>
</feature>
<feature type="binding site" evidence="1">
    <location>
        <position position="73"/>
    </location>
    <ligand>
        <name>Zn(2+)</name>
        <dbReference type="ChEBI" id="CHEBI:29105"/>
    </ligand>
</feature>
<feature type="binding site" evidence="1">
    <location>
        <position position="95"/>
    </location>
    <ligand>
        <name>Zn(2+)</name>
        <dbReference type="ChEBI" id="CHEBI:29105"/>
    </ligand>
</feature>
<feature type="binding site" evidence="1">
    <location>
        <position position="98"/>
    </location>
    <ligand>
        <name>Zn(2+)</name>
        <dbReference type="ChEBI" id="CHEBI:29105"/>
    </ligand>
</feature>
<feature type="sequence conflict" description="In Ref. 3; AAB30050." evidence="3" ref="3">
    <original>A</original>
    <variation>E</variation>
    <location>
        <position position="148"/>
    </location>
</feature>
<name>LEP4_NEIGO</name>
<proteinExistence type="inferred from homology"/>
<dbReference type="EC" id="3.4.23.43" evidence="1"/>
<dbReference type="EC" id="2.1.1.-" evidence="1"/>
<dbReference type="EMBL" id="U32588">
    <property type="protein sequence ID" value="AAC43468.1"/>
    <property type="molecule type" value="Genomic_DNA"/>
</dbReference>
<dbReference type="EMBL" id="S69067">
    <property type="protein sequence ID" value="AAB30050.1"/>
    <property type="molecule type" value="Genomic_DNA"/>
</dbReference>
<dbReference type="PIR" id="A53374">
    <property type="entry name" value="A53374"/>
</dbReference>
<dbReference type="PIR" id="S32915">
    <property type="entry name" value="S32915"/>
</dbReference>
<dbReference type="RefSeq" id="WP_003689814.1">
    <property type="nucleotide sequence ID" value="NZ_WHPL01000002.1"/>
</dbReference>
<dbReference type="OMA" id="GAWGGWQ"/>
<dbReference type="GO" id="GO:0005886">
    <property type="term" value="C:plasma membrane"/>
    <property type="evidence" value="ECO:0007669"/>
    <property type="project" value="UniProtKB-SubCell"/>
</dbReference>
<dbReference type="GO" id="GO:0004190">
    <property type="term" value="F:aspartic-type endopeptidase activity"/>
    <property type="evidence" value="ECO:0007669"/>
    <property type="project" value="UniProtKB-EC"/>
</dbReference>
<dbReference type="GO" id="GO:0046872">
    <property type="term" value="F:metal ion binding"/>
    <property type="evidence" value="ECO:0007669"/>
    <property type="project" value="UniProtKB-KW"/>
</dbReference>
<dbReference type="GO" id="GO:0008168">
    <property type="term" value="F:methyltransferase activity"/>
    <property type="evidence" value="ECO:0007669"/>
    <property type="project" value="UniProtKB-KW"/>
</dbReference>
<dbReference type="GO" id="GO:0032259">
    <property type="term" value="P:methylation"/>
    <property type="evidence" value="ECO:0007669"/>
    <property type="project" value="UniProtKB-KW"/>
</dbReference>
<dbReference type="GO" id="GO:0006465">
    <property type="term" value="P:signal peptide processing"/>
    <property type="evidence" value="ECO:0007669"/>
    <property type="project" value="TreeGrafter"/>
</dbReference>
<dbReference type="FunFam" id="1.20.120.1220:FF:000003">
    <property type="entry name" value="Type 4 prepilin-like proteins leader peptide-processing enzyme"/>
    <property type="match status" value="1"/>
</dbReference>
<dbReference type="Gene3D" id="1.20.120.1220">
    <property type="match status" value="1"/>
</dbReference>
<dbReference type="InterPro" id="IPR014032">
    <property type="entry name" value="Peptidase_A24A_bac"/>
</dbReference>
<dbReference type="InterPro" id="IPR000045">
    <property type="entry name" value="Prepilin_IV_endopep_pep"/>
</dbReference>
<dbReference type="InterPro" id="IPR010627">
    <property type="entry name" value="Prepilin_pept_A24_N"/>
</dbReference>
<dbReference type="InterPro" id="IPR050882">
    <property type="entry name" value="Prepilin_peptidase/N-MTase"/>
</dbReference>
<dbReference type="PANTHER" id="PTHR30487:SF0">
    <property type="entry name" value="PREPILIN LEADER PEPTIDASE_N-METHYLTRANSFERASE-RELATED"/>
    <property type="match status" value="1"/>
</dbReference>
<dbReference type="PANTHER" id="PTHR30487">
    <property type="entry name" value="TYPE 4 PREPILIN-LIKE PROTEINS LEADER PEPTIDE-PROCESSING ENZYME"/>
    <property type="match status" value="1"/>
</dbReference>
<dbReference type="Pfam" id="PF06750">
    <property type="entry name" value="A24_N_bact"/>
    <property type="match status" value="1"/>
</dbReference>
<dbReference type="Pfam" id="PF01478">
    <property type="entry name" value="Peptidase_A24"/>
    <property type="match status" value="1"/>
</dbReference>
<dbReference type="PRINTS" id="PR00864">
    <property type="entry name" value="PREPILNPTASE"/>
</dbReference>